<dbReference type="EC" id="2.4.2.4" evidence="1"/>
<dbReference type="EMBL" id="BA000040">
    <property type="protein sequence ID" value="BAC48382.1"/>
    <property type="molecule type" value="Genomic_DNA"/>
</dbReference>
<dbReference type="RefSeq" id="NP_769757.1">
    <property type="nucleotide sequence ID" value="NC_004463.1"/>
</dbReference>
<dbReference type="RefSeq" id="WP_011085901.1">
    <property type="nucleotide sequence ID" value="NC_004463.1"/>
</dbReference>
<dbReference type="SMR" id="Q89QK7"/>
<dbReference type="FunCoup" id="Q89QK7">
    <property type="interactions" value="344"/>
</dbReference>
<dbReference type="STRING" id="224911.AAV28_12605"/>
<dbReference type="EnsemblBacteria" id="BAC48382">
    <property type="protein sequence ID" value="BAC48382"/>
    <property type="gene ID" value="BAC48382"/>
</dbReference>
<dbReference type="GeneID" id="46490154"/>
<dbReference type="KEGG" id="bja:bll3117"/>
<dbReference type="PATRIC" id="fig|224911.44.peg.2747"/>
<dbReference type="eggNOG" id="COG0213">
    <property type="taxonomic scope" value="Bacteria"/>
</dbReference>
<dbReference type="HOGENOM" id="CLU_025040_6_0_5"/>
<dbReference type="InParanoid" id="Q89QK7"/>
<dbReference type="OrthoDB" id="341217at2"/>
<dbReference type="PhylomeDB" id="Q89QK7"/>
<dbReference type="Proteomes" id="UP000002526">
    <property type="component" value="Chromosome"/>
</dbReference>
<dbReference type="GO" id="GO:0005829">
    <property type="term" value="C:cytosol"/>
    <property type="evidence" value="ECO:0000318"/>
    <property type="project" value="GO_Central"/>
</dbReference>
<dbReference type="GO" id="GO:0004645">
    <property type="term" value="F:1,4-alpha-oligoglucan phosphorylase activity"/>
    <property type="evidence" value="ECO:0007669"/>
    <property type="project" value="InterPro"/>
</dbReference>
<dbReference type="GO" id="GO:0009032">
    <property type="term" value="F:thymidine phosphorylase activity"/>
    <property type="evidence" value="ECO:0007669"/>
    <property type="project" value="UniProtKB-UniRule"/>
</dbReference>
<dbReference type="GO" id="GO:0006206">
    <property type="term" value="P:pyrimidine nucleobase metabolic process"/>
    <property type="evidence" value="ECO:0007669"/>
    <property type="project" value="InterPro"/>
</dbReference>
<dbReference type="GO" id="GO:0006213">
    <property type="term" value="P:pyrimidine nucleoside metabolic process"/>
    <property type="evidence" value="ECO:0007669"/>
    <property type="project" value="InterPro"/>
</dbReference>
<dbReference type="Gene3D" id="1.20.970.50">
    <property type="match status" value="1"/>
</dbReference>
<dbReference type="Gene3D" id="3.40.1030.10">
    <property type="entry name" value="Nucleoside phosphorylase/phosphoribosyltransferase catalytic domain"/>
    <property type="match status" value="1"/>
</dbReference>
<dbReference type="Gene3D" id="3.90.1170.30">
    <property type="entry name" value="Pyrimidine nucleoside phosphorylase-like, C-terminal domain"/>
    <property type="match status" value="1"/>
</dbReference>
<dbReference type="HAMAP" id="MF_00703">
    <property type="entry name" value="Thymid_phosp_2"/>
    <property type="match status" value="1"/>
</dbReference>
<dbReference type="InterPro" id="IPR000312">
    <property type="entry name" value="Glycosyl_Trfase_fam3"/>
</dbReference>
<dbReference type="InterPro" id="IPR017459">
    <property type="entry name" value="Glycosyl_Trfase_fam3_N_dom"/>
</dbReference>
<dbReference type="InterPro" id="IPR036320">
    <property type="entry name" value="Glycosyl_Trfase_fam3_N_dom_sf"/>
</dbReference>
<dbReference type="InterPro" id="IPR035902">
    <property type="entry name" value="Nuc_phospho_transferase"/>
</dbReference>
<dbReference type="InterPro" id="IPR036566">
    <property type="entry name" value="PYNP-like_C_sf"/>
</dbReference>
<dbReference type="InterPro" id="IPR013102">
    <property type="entry name" value="PYNP_C"/>
</dbReference>
<dbReference type="InterPro" id="IPR017872">
    <property type="entry name" value="Pyrmidine_PPase_CS"/>
</dbReference>
<dbReference type="InterPro" id="IPR028579">
    <property type="entry name" value="Thym_Pase_Put"/>
</dbReference>
<dbReference type="InterPro" id="IPR013466">
    <property type="entry name" value="Thymidine/AMP_Pase"/>
</dbReference>
<dbReference type="InterPro" id="IPR000053">
    <property type="entry name" value="Thymidine/pyrmidine_PPase"/>
</dbReference>
<dbReference type="NCBIfam" id="TIGR02645">
    <property type="entry name" value="ARCH_P_rylase"/>
    <property type="match status" value="1"/>
</dbReference>
<dbReference type="NCBIfam" id="NF003338">
    <property type="entry name" value="PRK04350.1"/>
    <property type="match status" value="1"/>
</dbReference>
<dbReference type="PANTHER" id="PTHR10515">
    <property type="entry name" value="THYMIDINE PHOSPHORYLASE"/>
    <property type="match status" value="1"/>
</dbReference>
<dbReference type="PANTHER" id="PTHR10515:SF0">
    <property type="entry name" value="THYMIDINE PHOSPHORYLASE"/>
    <property type="match status" value="1"/>
</dbReference>
<dbReference type="Pfam" id="PF02885">
    <property type="entry name" value="Glycos_trans_3N"/>
    <property type="match status" value="1"/>
</dbReference>
<dbReference type="Pfam" id="PF00591">
    <property type="entry name" value="Glycos_transf_3"/>
    <property type="match status" value="1"/>
</dbReference>
<dbReference type="Pfam" id="PF07831">
    <property type="entry name" value="PYNP_C"/>
    <property type="match status" value="1"/>
</dbReference>
<dbReference type="PIRSF" id="PIRSF000478">
    <property type="entry name" value="TP_PyNP"/>
    <property type="match status" value="1"/>
</dbReference>
<dbReference type="SMART" id="SM00941">
    <property type="entry name" value="PYNP_C"/>
    <property type="match status" value="1"/>
</dbReference>
<dbReference type="SUPFAM" id="SSF52418">
    <property type="entry name" value="Nucleoside phosphorylase/phosphoribosyltransferase catalytic domain"/>
    <property type="match status" value="1"/>
</dbReference>
<dbReference type="SUPFAM" id="SSF47648">
    <property type="entry name" value="Nucleoside phosphorylase/phosphoribosyltransferase N-terminal domain"/>
    <property type="match status" value="1"/>
</dbReference>
<dbReference type="SUPFAM" id="SSF54680">
    <property type="entry name" value="Pyrimidine nucleoside phosphorylase C-terminal domain"/>
    <property type="match status" value="1"/>
</dbReference>
<dbReference type="PROSITE" id="PS00647">
    <property type="entry name" value="THYMID_PHOSPHORYLASE"/>
    <property type="match status" value="1"/>
</dbReference>
<reference key="1">
    <citation type="journal article" date="2002" name="DNA Res.">
        <title>Complete genomic sequence of nitrogen-fixing symbiotic bacterium Bradyrhizobium japonicum USDA110.</title>
        <authorList>
            <person name="Kaneko T."/>
            <person name="Nakamura Y."/>
            <person name="Sato S."/>
            <person name="Minamisawa K."/>
            <person name="Uchiumi T."/>
            <person name="Sasamoto S."/>
            <person name="Watanabe A."/>
            <person name="Idesawa K."/>
            <person name="Iriguchi M."/>
            <person name="Kawashima K."/>
            <person name="Kohara M."/>
            <person name="Matsumoto M."/>
            <person name="Shimpo S."/>
            <person name="Tsuruoka H."/>
            <person name="Wada T."/>
            <person name="Yamada M."/>
            <person name="Tabata S."/>
        </authorList>
    </citation>
    <scope>NUCLEOTIDE SEQUENCE [LARGE SCALE GENOMIC DNA]</scope>
    <source>
        <strain>JCM 10833 / BCRC 13528 / IAM 13628 / NBRC 14792 / USDA 110</strain>
    </source>
</reference>
<protein>
    <recommendedName>
        <fullName evidence="1">Putative thymidine phosphorylase</fullName>
        <ecNumber evidence="1">2.4.2.4</ecNumber>
    </recommendedName>
    <alternativeName>
        <fullName evidence="1">TdRPase</fullName>
    </alternativeName>
</protein>
<evidence type="ECO:0000255" key="1">
    <source>
        <dbReference type="HAMAP-Rule" id="MF_00703"/>
    </source>
</evidence>
<accession>Q89QK7</accession>
<comment type="catalytic activity">
    <reaction evidence="1">
        <text>thymidine + phosphate = 2-deoxy-alpha-D-ribose 1-phosphate + thymine</text>
        <dbReference type="Rhea" id="RHEA:16037"/>
        <dbReference type="ChEBI" id="CHEBI:17748"/>
        <dbReference type="ChEBI" id="CHEBI:17821"/>
        <dbReference type="ChEBI" id="CHEBI:43474"/>
        <dbReference type="ChEBI" id="CHEBI:57259"/>
        <dbReference type="EC" id="2.4.2.4"/>
    </reaction>
</comment>
<comment type="similarity">
    <text evidence="1">Belongs to the thymidine/pyrimidine-nucleoside phosphorylase family. Type 2 subfamily.</text>
</comment>
<name>TYPH_BRADU</name>
<proteinExistence type="inferred from homology"/>
<feature type="chain" id="PRO_0000059094" description="Putative thymidine phosphorylase">
    <location>
        <begin position="1"/>
        <end position="513"/>
    </location>
</feature>
<gene>
    <name type="ordered locus">bll3117</name>
</gene>
<sequence length="513" mass="54664">MHPDLPHSQLKIRRVRLDTGRENVVVISRQSKALRAEIFRGFSRVELRLNGKVLLATLLITDDDTLAAQDEIGLSEPAFRRFAEPVGTLVAVTPATPPESLEAVRAKIRGRTLSQAEIGAIINDLAHYRYSDMEIAAFLIGSASFITSDELLALTGAMAQAGTQLVWPDPVVVDKHCIGGIPGNRTSMVVVPIVAAHGLPIPKTSSRAITSPAGTADTMEVLARVNVGVEEMKAIVSSCNGCLIWGGHVNLSPADDVLISVERPLSLDTREQMVASIMSKKIAAGSTHLLIDIPVGPTAKVTGAVEAMRLRKLFEFVGDRFGRTVEVITTDGRQPIGNGIGPVLEANDVMAVLGNDKDAPRDLREKSLRLAAHLLEYDPKLRGGAGYARARELLDSGAALKQMQKIIDAQGPSTCSTELGSLSFDIKAAHDGTVSAIDCLRLNRLARTAGAPLDKGAGIRLFKKIGDHVEQGEPLYRVYAFDQPEHDLAASAAAAGNGYAVDGHDALPSKTAS</sequence>
<organism>
    <name type="scientific">Bradyrhizobium diazoefficiens (strain JCM 10833 / BCRC 13528 / IAM 13628 / NBRC 14792 / USDA 110)</name>
    <dbReference type="NCBI Taxonomy" id="224911"/>
    <lineage>
        <taxon>Bacteria</taxon>
        <taxon>Pseudomonadati</taxon>
        <taxon>Pseudomonadota</taxon>
        <taxon>Alphaproteobacteria</taxon>
        <taxon>Hyphomicrobiales</taxon>
        <taxon>Nitrobacteraceae</taxon>
        <taxon>Bradyrhizobium</taxon>
    </lineage>
</organism>
<keyword id="KW-0328">Glycosyltransferase</keyword>
<keyword id="KW-1185">Reference proteome</keyword>
<keyword id="KW-0808">Transferase</keyword>